<proteinExistence type="inferred from homology"/>
<name>RECJ_SALTY</name>
<gene>
    <name type="primary">recJ</name>
    <name type="ordered locus">STM3042</name>
</gene>
<comment type="function">
    <text>Single-stranded-DNA-specific exonuclease. Required for many types of recombinational events, although the stringency of the requirement for RecJ appears to vary with the type of recombinational event monitored and the other recombination gene products which are available.</text>
</comment>
<comment type="similarity">
    <text evidence="1">Belongs to the RecJ family.</text>
</comment>
<reference key="1">
    <citation type="journal article" date="2001" name="Nature">
        <title>Complete genome sequence of Salmonella enterica serovar Typhimurium LT2.</title>
        <authorList>
            <person name="McClelland M."/>
            <person name="Sanderson K.E."/>
            <person name="Spieth J."/>
            <person name="Clifton S.W."/>
            <person name="Latreille P."/>
            <person name="Courtney L."/>
            <person name="Porwollik S."/>
            <person name="Ali J."/>
            <person name="Dante M."/>
            <person name="Du F."/>
            <person name="Hou S."/>
            <person name="Layman D."/>
            <person name="Leonard S."/>
            <person name="Nguyen C."/>
            <person name="Scott K."/>
            <person name="Holmes A."/>
            <person name="Grewal N."/>
            <person name="Mulvaney E."/>
            <person name="Ryan E."/>
            <person name="Sun H."/>
            <person name="Florea L."/>
            <person name="Miller W."/>
            <person name="Stoneking T."/>
            <person name="Nhan M."/>
            <person name="Waterston R."/>
            <person name="Wilson R.K."/>
        </authorList>
    </citation>
    <scope>NUCLEOTIDE SEQUENCE [LARGE SCALE GENOMIC DNA]</scope>
    <source>
        <strain>LT2 / SGSC1412 / ATCC 700720</strain>
    </source>
</reference>
<reference key="2">
    <citation type="journal article" date="1990" name="Proc. Natl. Acad. Sci. U.S.A.">
        <title>Autogenous suppression of an opal mutation in the gene encoding peptide chain release factor 2.</title>
        <authorList>
            <person name="Kawakami K."/>
            <person name="Nakamura Y."/>
        </authorList>
    </citation>
    <scope>NUCLEOTIDE SEQUENCE [GENOMIC DNA] OF 564-577</scope>
    <source>
        <strain>LT2</strain>
    </source>
</reference>
<keyword id="KW-0269">Exonuclease</keyword>
<keyword id="KW-0378">Hydrolase</keyword>
<keyword id="KW-0540">Nuclease</keyword>
<keyword id="KW-1185">Reference proteome</keyword>
<feature type="chain" id="PRO_0000097232" description="Single-stranded-DNA-specific exonuclease RecJ">
    <location>
        <begin position="1"/>
        <end position="577"/>
    </location>
</feature>
<sequence>MKQQRQLRRREADETAELPADLPPLLRRLYASRGVRSARELERSVKGMLPWQQLSGIDNAVEILYNAFREGTRIIVVGDFDADGATSTALSVLGMRALGCDNISYLVPNRFEDGYGLSPEVVDQAKARGAQLIVTVDNGISSHAGVAHAKTLGIPVIVTDHHLPGDTLPDAEAIINPNLRDCEFPSKSLAGVGVAFYLMLALRTFLRDKGWFDERNIAPPNLAELLDLVALGTVADVVPLDANNRILTWQGLSRIRAGKCRPGIKALLEISNRDPQQLAASDLGFALGPRLNAAGRLDDMSVGVALLLCDNLGEARVLASELDALNQTRKEIEQGMQAEALILCEKLERSSETLPGGLAMYHPEWHQGVVGILASRIKERFHRPVIAFAPAGDGTLKGSGRSIQGLHMRDALERLDTLYPDLMIKFGGHAMAAGLSLEEHKFEQFQQRFGELVTEWLDPALLQGEVISDGPLSAAEMSMEVAQLLRDAGPWGQMFPEPLFDGRFRLLQQRLVGERHLKVMVEPVGGGPLLDGIAFNIDTTCWPDNGVREVELAYKLDINEFRGNRSLQIIIDDIWPL</sequence>
<accession>P28355</accession>
<organism>
    <name type="scientific">Salmonella typhimurium (strain LT2 / SGSC1412 / ATCC 700720)</name>
    <dbReference type="NCBI Taxonomy" id="99287"/>
    <lineage>
        <taxon>Bacteria</taxon>
        <taxon>Pseudomonadati</taxon>
        <taxon>Pseudomonadota</taxon>
        <taxon>Gammaproteobacteria</taxon>
        <taxon>Enterobacterales</taxon>
        <taxon>Enterobacteriaceae</taxon>
        <taxon>Salmonella</taxon>
    </lineage>
</organism>
<dbReference type="EC" id="3.1.-.-"/>
<dbReference type="EMBL" id="AE006468">
    <property type="protein sequence ID" value="AAL21917.1"/>
    <property type="molecule type" value="Genomic_DNA"/>
</dbReference>
<dbReference type="EMBL" id="M38590">
    <property type="protein sequence ID" value="AAA72913.1"/>
    <property type="molecule type" value="Genomic_DNA"/>
</dbReference>
<dbReference type="RefSeq" id="NP_461958.1">
    <property type="nucleotide sequence ID" value="NC_003197.2"/>
</dbReference>
<dbReference type="RefSeq" id="WP_000813394.1">
    <property type="nucleotide sequence ID" value="NC_003197.2"/>
</dbReference>
<dbReference type="SMR" id="P28355"/>
<dbReference type="STRING" id="99287.STM3042"/>
<dbReference type="PaxDb" id="99287-STM3042"/>
<dbReference type="GeneID" id="1254565"/>
<dbReference type="KEGG" id="stm:STM3042"/>
<dbReference type="PATRIC" id="fig|99287.12.peg.3222"/>
<dbReference type="HOGENOM" id="CLU_009736_5_1_6"/>
<dbReference type="OMA" id="NAGPWGQ"/>
<dbReference type="PhylomeDB" id="P28355"/>
<dbReference type="BioCyc" id="SENT99287:STM3042-MONOMER"/>
<dbReference type="Proteomes" id="UP000001014">
    <property type="component" value="Chromosome"/>
</dbReference>
<dbReference type="GO" id="GO:0003676">
    <property type="term" value="F:nucleic acid binding"/>
    <property type="evidence" value="ECO:0007669"/>
    <property type="project" value="InterPro"/>
</dbReference>
<dbReference type="GO" id="GO:0045145">
    <property type="term" value="F:single-stranded DNA 5'-3' DNA exonuclease activity"/>
    <property type="evidence" value="ECO:0000318"/>
    <property type="project" value="GO_Central"/>
</dbReference>
<dbReference type="GO" id="GO:0006310">
    <property type="term" value="P:DNA recombination"/>
    <property type="evidence" value="ECO:0000318"/>
    <property type="project" value="GO_Central"/>
</dbReference>
<dbReference type="GO" id="GO:0006281">
    <property type="term" value="P:DNA repair"/>
    <property type="evidence" value="ECO:0007669"/>
    <property type="project" value="InterPro"/>
</dbReference>
<dbReference type="FunFam" id="3.90.1640.30:FF:000001">
    <property type="entry name" value="Single-stranded-DNA-specific exonuclease RecJ"/>
    <property type="match status" value="1"/>
</dbReference>
<dbReference type="FunFam" id="3.10.310.30:FF:000001">
    <property type="entry name" value="Single-stranded-DNA-specific exonuclease recJ"/>
    <property type="match status" value="1"/>
</dbReference>
<dbReference type="Gene3D" id="3.10.310.30">
    <property type="match status" value="1"/>
</dbReference>
<dbReference type="Gene3D" id="3.90.1640.30">
    <property type="match status" value="1"/>
</dbReference>
<dbReference type="InterPro" id="IPR001667">
    <property type="entry name" value="DDH_dom"/>
</dbReference>
<dbReference type="InterPro" id="IPR038763">
    <property type="entry name" value="DHH_sf"/>
</dbReference>
<dbReference type="InterPro" id="IPR003156">
    <property type="entry name" value="DHHA1_dom"/>
</dbReference>
<dbReference type="InterPro" id="IPR004610">
    <property type="entry name" value="RecJ"/>
</dbReference>
<dbReference type="InterPro" id="IPR041122">
    <property type="entry name" value="RecJ_OB"/>
</dbReference>
<dbReference type="InterPro" id="IPR051673">
    <property type="entry name" value="SSDNA_exonuclease_RecJ"/>
</dbReference>
<dbReference type="NCBIfam" id="NF008290">
    <property type="entry name" value="PRK11070.1"/>
    <property type="match status" value="1"/>
</dbReference>
<dbReference type="NCBIfam" id="TIGR00644">
    <property type="entry name" value="recJ"/>
    <property type="match status" value="1"/>
</dbReference>
<dbReference type="PANTHER" id="PTHR30255">
    <property type="entry name" value="SINGLE-STRANDED-DNA-SPECIFIC EXONUCLEASE RECJ"/>
    <property type="match status" value="1"/>
</dbReference>
<dbReference type="PANTHER" id="PTHR30255:SF2">
    <property type="entry name" value="SINGLE-STRANDED-DNA-SPECIFIC EXONUCLEASE RECJ"/>
    <property type="match status" value="1"/>
</dbReference>
<dbReference type="Pfam" id="PF01368">
    <property type="entry name" value="DHH"/>
    <property type="match status" value="1"/>
</dbReference>
<dbReference type="Pfam" id="PF02272">
    <property type="entry name" value="DHHA1"/>
    <property type="match status" value="1"/>
</dbReference>
<dbReference type="Pfam" id="PF17768">
    <property type="entry name" value="RecJ_OB"/>
    <property type="match status" value="1"/>
</dbReference>
<dbReference type="SUPFAM" id="SSF64182">
    <property type="entry name" value="DHH phosphoesterases"/>
    <property type="match status" value="1"/>
</dbReference>
<protein>
    <recommendedName>
        <fullName>Single-stranded-DNA-specific exonuclease RecJ</fullName>
        <ecNumber>3.1.-.-</ecNumber>
    </recommendedName>
</protein>
<evidence type="ECO:0000305" key="1"/>